<comment type="function">
    <text evidence="6 7">Probably involved in the uptake of galactarate and/or D-glucarate (Probable). May also transport D-glycerate (Probable).</text>
</comment>
<comment type="catalytic activity">
    <reaction evidence="6 7">
        <text>galactarate(in) + H(+)(in) = galactarate(out) + H(+)(out)</text>
        <dbReference type="Rhea" id="RHEA:28478"/>
        <dbReference type="ChEBI" id="CHEBI:15378"/>
        <dbReference type="ChEBI" id="CHEBI:16537"/>
    </reaction>
</comment>
<comment type="catalytic activity">
    <reaction evidence="6 7">
        <text>D-glucarate(in) + H(+)(in) = D-glucarate(out) + H(+)(out)</text>
        <dbReference type="Rhea" id="RHEA:28474"/>
        <dbReference type="ChEBI" id="CHEBI:15378"/>
        <dbReference type="ChEBI" id="CHEBI:30612"/>
    </reaction>
</comment>
<comment type="catalytic activity">
    <reaction evidence="6">
        <text>(R)-glycerate(in) + H(+)(in) = (R)-glycerate(out) + H(+)(out)</text>
        <dbReference type="Rhea" id="RHEA:70927"/>
        <dbReference type="ChEBI" id="CHEBI:15378"/>
        <dbReference type="ChEBI" id="CHEBI:16659"/>
    </reaction>
</comment>
<comment type="subcellular location">
    <subcellularLocation>
        <location evidence="3">Cell inner membrane</location>
        <topology evidence="1">Multi-pass membrane protein</topology>
    </subcellularLocation>
</comment>
<comment type="induction">
    <text evidence="2">Induced in the presence of D-galactarate, D-glucarate or D-glycerate.</text>
</comment>
<comment type="similarity">
    <text evidence="5">Belongs to the major facilitator superfamily. Phthalate permease family.</text>
</comment>
<gene>
    <name evidence="4" type="primary">gudP</name>
    <name type="synonym">ygcZ</name>
    <name type="ordered locus">b2789</name>
    <name type="ordered locus">JW2760</name>
</gene>
<protein>
    <recommendedName>
        <fullName evidence="5">Probable galactarate/D-glucarate transporter GudP</fullName>
    </recommendedName>
</protein>
<keyword id="KW-0997">Cell inner membrane</keyword>
<keyword id="KW-1003">Cell membrane</keyword>
<keyword id="KW-0472">Membrane</keyword>
<keyword id="KW-1185">Reference proteome</keyword>
<keyword id="KW-0812">Transmembrane</keyword>
<keyword id="KW-1133">Transmembrane helix</keyword>
<keyword id="KW-0813">Transport</keyword>
<name>GUDP_ECOLI</name>
<reference key="1">
    <citation type="journal article" date="1997" name="Science">
        <title>The complete genome sequence of Escherichia coli K-12.</title>
        <authorList>
            <person name="Blattner F.R."/>
            <person name="Plunkett G. III"/>
            <person name="Bloch C.A."/>
            <person name="Perna N.T."/>
            <person name="Burland V."/>
            <person name="Riley M."/>
            <person name="Collado-Vides J."/>
            <person name="Glasner J.D."/>
            <person name="Rode C.K."/>
            <person name="Mayhew G.F."/>
            <person name="Gregor J."/>
            <person name="Davis N.W."/>
            <person name="Kirkpatrick H.A."/>
            <person name="Goeden M.A."/>
            <person name="Rose D.J."/>
            <person name="Mau B."/>
            <person name="Shao Y."/>
        </authorList>
    </citation>
    <scope>NUCLEOTIDE SEQUENCE [LARGE SCALE GENOMIC DNA]</scope>
    <source>
        <strain>K12 / MG1655 / ATCC 47076</strain>
    </source>
</reference>
<reference key="2">
    <citation type="journal article" date="2006" name="Mol. Syst. Biol.">
        <title>Highly accurate genome sequences of Escherichia coli K-12 strains MG1655 and W3110.</title>
        <authorList>
            <person name="Hayashi K."/>
            <person name="Morooka N."/>
            <person name="Yamamoto Y."/>
            <person name="Fujita K."/>
            <person name="Isono K."/>
            <person name="Choi S."/>
            <person name="Ohtsubo E."/>
            <person name="Baba T."/>
            <person name="Wanner B.L."/>
            <person name="Mori H."/>
            <person name="Horiuchi T."/>
        </authorList>
    </citation>
    <scope>NUCLEOTIDE SEQUENCE [LARGE SCALE GENOMIC DNA]</scope>
    <source>
        <strain>K12 / W3110 / ATCC 27325 / DSM 5911</strain>
    </source>
</reference>
<reference key="3">
    <citation type="journal article" date="1998" name="Biochemistry">
        <title>Evolution of enzymatic activities in the enolase superfamily: characterization of the (D)-glucarate/galactarate catabolic pathway in Escherichia coli.</title>
        <authorList>
            <person name="Hubbard B.K."/>
            <person name="Koch M."/>
            <person name="Palmer D.R."/>
            <person name="Babbitt P.C."/>
            <person name="Gerlt J.A."/>
        </authorList>
    </citation>
    <scope>POSSIBLE FUNCTION</scope>
</reference>
<reference key="4">
    <citation type="journal article" date="2000" name="J. Bacteriol.">
        <title>A common regulator for the operons encoding the enzymes involved in D-galactarate, D-glucarate, and D-glycerate utilization in Escherichia coli.</title>
        <authorList>
            <person name="Monterrubio R."/>
            <person name="Baldoma L."/>
            <person name="Obradors N."/>
            <person name="Aguilar J."/>
            <person name="Badia J."/>
        </authorList>
    </citation>
    <scope>POSSIBLE FUNCTION</scope>
    <scope>INDUCTION</scope>
    <scope>GENE NAME</scope>
</reference>
<reference key="5">
    <citation type="journal article" date="2005" name="Science">
        <title>Global topology analysis of the Escherichia coli inner membrane proteome.</title>
        <authorList>
            <person name="Daley D.O."/>
            <person name="Rapp M."/>
            <person name="Granseth E."/>
            <person name="Melen K."/>
            <person name="Drew D."/>
            <person name="von Heijne G."/>
        </authorList>
    </citation>
    <scope>TOPOLOGY [LARGE SCALE ANALYSIS]</scope>
    <scope>SUBCELLULAR LOCATION</scope>
    <source>
        <strain>K12 / MG1655 / ATCC 47076</strain>
    </source>
</reference>
<sequence>MSSLSQAASSVEKRTNARYWIVVMLFIVTSFNYGDRATLSIAGSEMAKDIGLDPVGMGYVFSAFSWAYVIGQIPGGWLLDRFGSKRVYFWSIFIWSMFTLLQGFVDIFSGFGIIVALFTLRFLVGLAEAPSFPGNSRIVAAWFPAQERGTAVSIFNSAQYFATVIFAPIMGWLTHEVGWSHVFFFMGGLGIVISFIWLKVIHEPNQHPGVNKKELEYIAAGGALINMDQQNTKVKVPFSVKWGQIKQLLGSRMMIGVYIGQYCINALTYFFITWFPVYLVQARGMSILKAGFVASVPAVCGFIGGVLGGIISDWLMRRTGSLNIARKTPIVMGMLLSMVMVFCNYVNVEWMIIGFMALAFFGKGIGALGWAVMADTAPKEISGLSGGLFNMFGNISGIVTPIAIGYIVGTTGSFNGALIYVGVHALIAVLSYLVLVGDIKRIELKPVAGQ</sequence>
<organism>
    <name type="scientific">Escherichia coli (strain K12)</name>
    <dbReference type="NCBI Taxonomy" id="83333"/>
    <lineage>
        <taxon>Bacteria</taxon>
        <taxon>Pseudomonadati</taxon>
        <taxon>Pseudomonadota</taxon>
        <taxon>Gammaproteobacteria</taxon>
        <taxon>Enterobacterales</taxon>
        <taxon>Enterobacteriaceae</taxon>
        <taxon>Escherichia</taxon>
    </lineage>
</organism>
<accession>Q46916</accession>
<accession>Q2MA45</accession>
<feature type="chain" id="PRO_0000121385" description="Probable galactarate/D-glucarate transporter GudP">
    <location>
        <begin position="1"/>
        <end position="450"/>
    </location>
</feature>
<feature type="topological domain" description="Cytoplasmic" evidence="5">
    <location>
        <begin position="1"/>
        <end position="20"/>
    </location>
</feature>
<feature type="transmembrane region" description="Helical" evidence="1">
    <location>
        <begin position="21"/>
        <end position="41"/>
    </location>
</feature>
<feature type="topological domain" description="Periplasmic" evidence="5">
    <location>
        <begin position="42"/>
        <end position="58"/>
    </location>
</feature>
<feature type="transmembrane region" description="Helical" evidence="1">
    <location>
        <begin position="59"/>
        <end position="79"/>
    </location>
</feature>
<feature type="topological domain" description="Cytoplasmic" evidence="5">
    <location>
        <begin position="80"/>
        <end position="85"/>
    </location>
</feature>
<feature type="transmembrane region" description="Helical" evidence="1">
    <location>
        <begin position="86"/>
        <end position="105"/>
    </location>
</feature>
<feature type="topological domain" description="Periplasmic" evidence="5">
    <location>
        <begin position="106"/>
        <end position="109"/>
    </location>
</feature>
<feature type="transmembrane region" description="Helical" evidence="1">
    <location>
        <begin position="110"/>
        <end position="132"/>
    </location>
</feature>
<feature type="topological domain" description="Cytoplasmic" evidence="5">
    <location>
        <begin position="133"/>
        <end position="153"/>
    </location>
</feature>
<feature type="transmembrane region" description="Helical" evidence="1">
    <location>
        <begin position="154"/>
        <end position="174"/>
    </location>
</feature>
<feature type="topological domain" description="Periplasmic" evidence="5">
    <location>
        <begin position="175"/>
        <end position="176"/>
    </location>
</feature>
<feature type="transmembrane region" description="Helical" evidence="1">
    <location>
        <begin position="177"/>
        <end position="197"/>
    </location>
</feature>
<feature type="topological domain" description="Cytoplasmic" evidence="5">
    <location>
        <begin position="198"/>
        <end position="254"/>
    </location>
</feature>
<feature type="transmembrane region" description="Helical" evidence="1">
    <location>
        <begin position="255"/>
        <end position="275"/>
    </location>
</feature>
<feature type="topological domain" description="Periplasmic" evidence="5">
    <location>
        <begin position="276"/>
        <end position="290"/>
    </location>
</feature>
<feature type="transmembrane region" description="Helical" evidence="1">
    <location>
        <begin position="291"/>
        <end position="311"/>
    </location>
</feature>
<feature type="topological domain" description="Cytoplasmic" evidence="5">
    <location>
        <begin position="312"/>
        <end position="329"/>
    </location>
</feature>
<feature type="transmembrane region" description="Helical" evidence="1">
    <location>
        <begin position="330"/>
        <end position="350"/>
    </location>
</feature>
<feature type="topological domain" description="Periplasmic" evidence="5">
    <location>
        <position position="351"/>
    </location>
</feature>
<feature type="transmembrane region" description="Helical" evidence="1">
    <location>
        <begin position="352"/>
        <end position="372"/>
    </location>
</feature>
<feature type="topological domain" description="Cytoplasmic" evidence="5">
    <location>
        <begin position="373"/>
        <end position="387"/>
    </location>
</feature>
<feature type="transmembrane region" description="Helical" evidence="1">
    <location>
        <begin position="388"/>
        <end position="408"/>
    </location>
</feature>
<feature type="topological domain" description="Periplasmic" evidence="5">
    <location>
        <begin position="409"/>
        <end position="415"/>
    </location>
</feature>
<feature type="transmembrane region" description="Helical" evidence="1">
    <location>
        <begin position="416"/>
        <end position="436"/>
    </location>
</feature>
<feature type="topological domain" description="Cytoplasmic" evidence="3">
    <location>
        <begin position="437"/>
        <end position="450"/>
    </location>
</feature>
<proteinExistence type="evidence at protein level"/>
<dbReference type="EMBL" id="U29581">
    <property type="protein sequence ID" value="AAB40439.1"/>
    <property type="molecule type" value="Genomic_DNA"/>
</dbReference>
<dbReference type="EMBL" id="U00096">
    <property type="protein sequence ID" value="AAC75831.1"/>
    <property type="molecule type" value="Genomic_DNA"/>
</dbReference>
<dbReference type="EMBL" id="AP009048">
    <property type="protein sequence ID" value="BAE76861.1"/>
    <property type="molecule type" value="Genomic_DNA"/>
</dbReference>
<dbReference type="PIR" id="A65061">
    <property type="entry name" value="A65061"/>
</dbReference>
<dbReference type="RefSeq" id="NP_417269.1">
    <property type="nucleotide sequence ID" value="NC_000913.3"/>
</dbReference>
<dbReference type="RefSeq" id="WP_000097072.1">
    <property type="nucleotide sequence ID" value="NZ_LN832404.1"/>
</dbReference>
<dbReference type="SMR" id="Q46916"/>
<dbReference type="BioGRID" id="4263242">
    <property type="interactions" value="17"/>
</dbReference>
<dbReference type="FunCoup" id="Q46916">
    <property type="interactions" value="407"/>
</dbReference>
<dbReference type="STRING" id="511145.b2789"/>
<dbReference type="PaxDb" id="511145-b2789"/>
<dbReference type="EnsemblBacteria" id="AAC75831">
    <property type="protein sequence ID" value="AAC75831"/>
    <property type="gene ID" value="b2789"/>
</dbReference>
<dbReference type="GeneID" id="947265"/>
<dbReference type="KEGG" id="ecj:JW2760"/>
<dbReference type="KEGG" id="eco:b2789"/>
<dbReference type="KEGG" id="ecoc:C3026_15335"/>
<dbReference type="PATRIC" id="fig|1411691.4.peg.3945"/>
<dbReference type="EchoBASE" id="EB2961"/>
<dbReference type="eggNOG" id="COG2271">
    <property type="taxonomic scope" value="Bacteria"/>
</dbReference>
<dbReference type="HOGENOM" id="CLU_001265_5_1_6"/>
<dbReference type="InParanoid" id="Q46916"/>
<dbReference type="OMA" id="LITFWMP"/>
<dbReference type="OrthoDB" id="9771451at2"/>
<dbReference type="PhylomeDB" id="Q46916"/>
<dbReference type="BioCyc" id="EcoCyc:B2789-MONOMER"/>
<dbReference type="BioCyc" id="MetaCyc:B2789-MONOMER"/>
<dbReference type="PRO" id="PR:Q46916"/>
<dbReference type="Proteomes" id="UP000000625">
    <property type="component" value="Chromosome"/>
</dbReference>
<dbReference type="GO" id="GO:0005886">
    <property type="term" value="C:plasma membrane"/>
    <property type="evidence" value="ECO:0000314"/>
    <property type="project" value="EcoCyc"/>
</dbReference>
<dbReference type="GO" id="GO:0022857">
    <property type="term" value="F:transmembrane transporter activity"/>
    <property type="evidence" value="ECO:0007669"/>
    <property type="project" value="InterPro"/>
</dbReference>
<dbReference type="GO" id="GO:0042836">
    <property type="term" value="P:D-glucarate metabolic process"/>
    <property type="evidence" value="ECO:0000270"/>
    <property type="project" value="EcoCyc"/>
</dbReference>
<dbReference type="GO" id="GO:0019580">
    <property type="term" value="P:galactarate metabolic process"/>
    <property type="evidence" value="ECO:0000270"/>
    <property type="project" value="EcoCyc"/>
</dbReference>
<dbReference type="GO" id="GO:0098656">
    <property type="term" value="P:monoatomic anion transmembrane transport"/>
    <property type="evidence" value="ECO:0007669"/>
    <property type="project" value="GOC"/>
</dbReference>
<dbReference type="CDD" id="cd17319">
    <property type="entry name" value="MFS_ExuT_GudP_like"/>
    <property type="match status" value="1"/>
</dbReference>
<dbReference type="FunFam" id="1.20.1250.20:FF:000006">
    <property type="entry name" value="MFS transporter"/>
    <property type="match status" value="1"/>
</dbReference>
<dbReference type="FunFam" id="1.20.1250.20:FF:000010">
    <property type="entry name" value="Probable glucarate transporter"/>
    <property type="match status" value="1"/>
</dbReference>
<dbReference type="Gene3D" id="1.20.1250.20">
    <property type="entry name" value="MFS general substrate transporter like domains"/>
    <property type="match status" value="2"/>
</dbReference>
<dbReference type="InterPro" id="IPR011701">
    <property type="entry name" value="MFS"/>
</dbReference>
<dbReference type="InterPro" id="IPR020846">
    <property type="entry name" value="MFS_dom"/>
</dbReference>
<dbReference type="InterPro" id="IPR050382">
    <property type="entry name" value="MFS_Na/Anion_cotransporter"/>
</dbReference>
<dbReference type="InterPro" id="IPR036259">
    <property type="entry name" value="MFS_trans_sf"/>
</dbReference>
<dbReference type="InterPro" id="IPR000849">
    <property type="entry name" value="Sugar_P_transporter"/>
</dbReference>
<dbReference type="NCBIfam" id="TIGR00893">
    <property type="entry name" value="2A0114"/>
    <property type="match status" value="1"/>
</dbReference>
<dbReference type="PANTHER" id="PTHR11662:SF399">
    <property type="entry name" value="FI19708P1-RELATED"/>
    <property type="match status" value="1"/>
</dbReference>
<dbReference type="PANTHER" id="PTHR11662">
    <property type="entry name" value="SOLUTE CARRIER FAMILY 17"/>
    <property type="match status" value="1"/>
</dbReference>
<dbReference type="Pfam" id="PF07690">
    <property type="entry name" value="MFS_1"/>
    <property type="match status" value="1"/>
</dbReference>
<dbReference type="PIRSF" id="PIRSF002808">
    <property type="entry name" value="Hexose_phosphate_transp"/>
    <property type="match status" value="1"/>
</dbReference>
<dbReference type="SUPFAM" id="SSF103473">
    <property type="entry name" value="MFS general substrate transporter"/>
    <property type="match status" value="1"/>
</dbReference>
<dbReference type="PROSITE" id="PS50850">
    <property type="entry name" value="MFS"/>
    <property type="match status" value="1"/>
</dbReference>
<evidence type="ECO:0000255" key="1"/>
<evidence type="ECO:0000269" key="2">
    <source>
    </source>
</evidence>
<evidence type="ECO:0000269" key="3">
    <source>
    </source>
</evidence>
<evidence type="ECO:0000303" key="4">
    <source>
    </source>
</evidence>
<evidence type="ECO:0000305" key="5"/>
<evidence type="ECO:0000305" key="6">
    <source>
    </source>
</evidence>
<evidence type="ECO:0000305" key="7">
    <source>
    </source>
</evidence>